<evidence type="ECO:0000255" key="1">
    <source>
        <dbReference type="HAMAP-Rule" id="MF_00141"/>
    </source>
</evidence>
<feature type="chain" id="PRO_1000010852" description="Elongation factor P">
    <location>
        <begin position="1"/>
        <end position="186"/>
    </location>
</feature>
<protein>
    <recommendedName>
        <fullName evidence="1">Elongation factor P</fullName>
        <shortName evidence="1">EF-P</shortName>
    </recommendedName>
</protein>
<organism>
    <name type="scientific">Shewanella sp. (strain MR-4)</name>
    <dbReference type="NCBI Taxonomy" id="60480"/>
    <lineage>
        <taxon>Bacteria</taxon>
        <taxon>Pseudomonadati</taxon>
        <taxon>Pseudomonadota</taxon>
        <taxon>Gammaproteobacteria</taxon>
        <taxon>Alteromonadales</taxon>
        <taxon>Shewanellaceae</taxon>
        <taxon>Shewanella</taxon>
    </lineage>
</organism>
<dbReference type="EMBL" id="CP000446">
    <property type="protein sequence ID" value="ABI39111.1"/>
    <property type="molecule type" value="Genomic_DNA"/>
</dbReference>
<dbReference type="RefSeq" id="WP_011622801.1">
    <property type="nucleotide sequence ID" value="NC_008321.1"/>
</dbReference>
<dbReference type="SMR" id="Q0HIK6"/>
<dbReference type="KEGG" id="she:Shewmr4_2038"/>
<dbReference type="HOGENOM" id="CLU_074944_2_1_6"/>
<dbReference type="UniPathway" id="UPA00345"/>
<dbReference type="GO" id="GO:0005737">
    <property type="term" value="C:cytoplasm"/>
    <property type="evidence" value="ECO:0007669"/>
    <property type="project" value="UniProtKB-SubCell"/>
</dbReference>
<dbReference type="GO" id="GO:0003746">
    <property type="term" value="F:translation elongation factor activity"/>
    <property type="evidence" value="ECO:0007669"/>
    <property type="project" value="UniProtKB-UniRule"/>
</dbReference>
<dbReference type="GO" id="GO:0043043">
    <property type="term" value="P:peptide biosynthetic process"/>
    <property type="evidence" value="ECO:0007669"/>
    <property type="project" value="InterPro"/>
</dbReference>
<dbReference type="CDD" id="cd04470">
    <property type="entry name" value="S1_EF-P_repeat_1"/>
    <property type="match status" value="1"/>
</dbReference>
<dbReference type="CDD" id="cd05794">
    <property type="entry name" value="S1_EF-P_repeat_2"/>
    <property type="match status" value="1"/>
</dbReference>
<dbReference type="FunFam" id="2.30.30.30:FF:000003">
    <property type="entry name" value="Elongation factor P"/>
    <property type="match status" value="1"/>
</dbReference>
<dbReference type="FunFam" id="2.40.50.140:FF:000004">
    <property type="entry name" value="Elongation factor P"/>
    <property type="match status" value="1"/>
</dbReference>
<dbReference type="FunFam" id="2.40.50.140:FF:000009">
    <property type="entry name" value="Elongation factor P"/>
    <property type="match status" value="1"/>
</dbReference>
<dbReference type="Gene3D" id="2.30.30.30">
    <property type="match status" value="1"/>
</dbReference>
<dbReference type="Gene3D" id="2.40.50.140">
    <property type="entry name" value="Nucleic acid-binding proteins"/>
    <property type="match status" value="2"/>
</dbReference>
<dbReference type="HAMAP" id="MF_00141">
    <property type="entry name" value="EF_P"/>
    <property type="match status" value="1"/>
</dbReference>
<dbReference type="InterPro" id="IPR015365">
    <property type="entry name" value="Elong-fact-P_C"/>
</dbReference>
<dbReference type="InterPro" id="IPR012340">
    <property type="entry name" value="NA-bd_OB-fold"/>
</dbReference>
<dbReference type="InterPro" id="IPR014722">
    <property type="entry name" value="Rib_uL2_dom2"/>
</dbReference>
<dbReference type="InterPro" id="IPR020599">
    <property type="entry name" value="Transl_elong_fac_P/YeiP"/>
</dbReference>
<dbReference type="InterPro" id="IPR013185">
    <property type="entry name" value="Transl_elong_KOW-like"/>
</dbReference>
<dbReference type="InterPro" id="IPR001059">
    <property type="entry name" value="Transl_elong_P/YeiP_cen"/>
</dbReference>
<dbReference type="InterPro" id="IPR011768">
    <property type="entry name" value="Transl_elongation_fac_P"/>
</dbReference>
<dbReference type="InterPro" id="IPR008991">
    <property type="entry name" value="Translation_prot_SH3-like_sf"/>
</dbReference>
<dbReference type="NCBIfam" id="TIGR00038">
    <property type="entry name" value="efp"/>
    <property type="match status" value="1"/>
</dbReference>
<dbReference type="NCBIfam" id="NF001810">
    <property type="entry name" value="PRK00529.1"/>
    <property type="match status" value="1"/>
</dbReference>
<dbReference type="PANTHER" id="PTHR30053">
    <property type="entry name" value="ELONGATION FACTOR P"/>
    <property type="match status" value="1"/>
</dbReference>
<dbReference type="PANTHER" id="PTHR30053:SF12">
    <property type="entry name" value="ELONGATION FACTOR P (EF-P) FAMILY PROTEIN"/>
    <property type="match status" value="1"/>
</dbReference>
<dbReference type="Pfam" id="PF01132">
    <property type="entry name" value="EFP"/>
    <property type="match status" value="1"/>
</dbReference>
<dbReference type="Pfam" id="PF08207">
    <property type="entry name" value="EFP_N"/>
    <property type="match status" value="1"/>
</dbReference>
<dbReference type="Pfam" id="PF09285">
    <property type="entry name" value="Elong-fact-P_C"/>
    <property type="match status" value="1"/>
</dbReference>
<dbReference type="PIRSF" id="PIRSF005901">
    <property type="entry name" value="EF-P"/>
    <property type="match status" value="1"/>
</dbReference>
<dbReference type="SMART" id="SM01185">
    <property type="entry name" value="EFP"/>
    <property type="match status" value="1"/>
</dbReference>
<dbReference type="SMART" id="SM00841">
    <property type="entry name" value="Elong-fact-P_C"/>
    <property type="match status" value="1"/>
</dbReference>
<dbReference type="SUPFAM" id="SSF50249">
    <property type="entry name" value="Nucleic acid-binding proteins"/>
    <property type="match status" value="2"/>
</dbReference>
<dbReference type="SUPFAM" id="SSF50104">
    <property type="entry name" value="Translation proteins SH3-like domain"/>
    <property type="match status" value="1"/>
</dbReference>
<accession>Q0HIK6</accession>
<sequence>MKTAHEVRPGNVIMFEGSPWVVQKTETTRSGRNAAIVKLKLKNLLLNSGTETTFKGEDKIDDIILDRLDCTYSYFADPMYVFMDAEYNQYDVEAENLGDAAAYIVDGMEETCQVTFYEGKAISVEMPTTIVREVIYTEPSARGDTSGKVMKPATITGGGTISVADFVKVGDKIEIDTRTGEFKKRV</sequence>
<keyword id="KW-0963">Cytoplasm</keyword>
<keyword id="KW-0251">Elongation factor</keyword>
<keyword id="KW-0648">Protein biosynthesis</keyword>
<proteinExistence type="inferred from homology"/>
<gene>
    <name evidence="1" type="primary">efp</name>
    <name type="ordered locus">Shewmr4_2038</name>
</gene>
<name>EFP_SHESM</name>
<comment type="function">
    <text evidence="1">Involved in peptide bond synthesis. Stimulates efficient translation and peptide-bond synthesis on native or reconstituted 70S ribosomes in vitro. Probably functions indirectly by altering the affinity of the ribosome for aminoacyl-tRNA, thus increasing their reactivity as acceptors for peptidyl transferase.</text>
</comment>
<comment type="pathway">
    <text evidence="1">Protein biosynthesis; polypeptide chain elongation.</text>
</comment>
<comment type="subcellular location">
    <subcellularLocation>
        <location evidence="1">Cytoplasm</location>
    </subcellularLocation>
</comment>
<comment type="similarity">
    <text evidence="1">Belongs to the elongation factor P family.</text>
</comment>
<reference key="1">
    <citation type="submission" date="2006-08" db="EMBL/GenBank/DDBJ databases">
        <title>Complete sequence of Shewanella sp. MR-4.</title>
        <authorList>
            <consortium name="US DOE Joint Genome Institute"/>
            <person name="Copeland A."/>
            <person name="Lucas S."/>
            <person name="Lapidus A."/>
            <person name="Barry K."/>
            <person name="Detter J.C."/>
            <person name="Glavina del Rio T."/>
            <person name="Hammon N."/>
            <person name="Israni S."/>
            <person name="Dalin E."/>
            <person name="Tice H."/>
            <person name="Pitluck S."/>
            <person name="Kiss H."/>
            <person name="Brettin T."/>
            <person name="Bruce D."/>
            <person name="Han C."/>
            <person name="Tapia R."/>
            <person name="Gilna P."/>
            <person name="Schmutz J."/>
            <person name="Larimer F."/>
            <person name="Land M."/>
            <person name="Hauser L."/>
            <person name="Kyrpides N."/>
            <person name="Mikhailova N."/>
            <person name="Nealson K."/>
            <person name="Konstantinidis K."/>
            <person name="Klappenbach J."/>
            <person name="Tiedje J."/>
            <person name="Richardson P."/>
        </authorList>
    </citation>
    <scope>NUCLEOTIDE SEQUENCE [LARGE SCALE GENOMIC DNA]</scope>
    <source>
        <strain>MR-4</strain>
    </source>
</reference>